<organism>
    <name type="scientific">Kluyveromyces lactis (strain ATCC 8585 / CBS 2359 / DSM 70799 / NBRC 1267 / NRRL Y-1140 / WM37)</name>
    <name type="common">Yeast</name>
    <name type="synonym">Candida sphaerica</name>
    <dbReference type="NCBI Taxonomy" id="284590"/>
    <lineage>
        <taxon>Eukaryota</taxon>
        <taxon>Fungi</taxon>
        <taxon>Dikarya</taxon>
        <taxon>Ascomycota</taxon>
        <taxon>Saccharomycotina</taxon>
        <taxon>Saccharomycetes</taxon>
        <taxon>Saccharomycetales</taxon>
        <taxon>Saccharomycetaceae</taxon>
        <taxon>Kluyveromyces</taxon>
    </lineage>
</organism>
<comment type="function">
    <text evidence="1">Required for cytoplasm to vacuole transport (Cvt) and autophagy as a part of the autophagy-specific VPS34 PI3-kinase complex I. This complex is essential to recruit the ATG8-phosphatidylinositol conjugate and the ATG12-ATG5 conjugate to the pre-autophagosomal structure. ATG14 mediates the specific binding of the VPS34 PI3-kinase complex I to the preautophagosomal structure (PAS) (By similarity).</text>
</comment>
<comment type="subcellular location">
    <subcellularLocation>
        <location evidence="1">Preautophagosomal structure membrane</location>
        <topology evidence="1">Peripheral membrane protein</topology>
    </subcellularLocation>
    <subcellularLocation>
        <location evidence="1">Vacuole membrane</location>
        <topology evidence="1">Peripheral membrane protein</topology>
    </subcellularLocation>
</comment>
<comment type="domain">
    <text evidence="1">Coiled-Coils at the N-terminal half are essential for autophagy.</text>
</comment>
<comment type="similarity">
    <text evidence="3">Belongs to the ATG14 family.</text>
</comment>
<proteinExistence type="inferred from homology"/>
<accession>Q6CRH0</accession>
<evidence type="ECO:0000250" key="1"/>
<evidence type="ECO:0000255" key="2"/>
<evidence type="ECO:0000305" key="3"/>
<sequence>MIHCGICGSPKIPNVEFLCAHCINGSPSILLRDKLKLLLLRQEVEQLKHDVGEQLEAGFAGNGQFGKQLQKLDVYNEKRRLIKLRQRVQLVKNKIDVKRNRYQELERYLKDEDHFDKDKKVFDVEEIVNDEALTMSKLSQVLQRKQTALFKELCQWFRIEKCDEDVNNNNNVSAYTIWGVPMINLKYSNEMDRDKQVISMRYIHQFINFSFNIWLFEGISDVSIENEQNVIQNYSQLIYDTLRLLQVRKLVSESVSIRDILIRYDLDGMIYYLSKSKYLSSLDDASNSYPPTLQNIKQLVASMIPSI</sequence>
<dbReference type="EMBL" id="CR382124">
    <property type="protein sequence ID" value="CAH00565.1"/>
    <property type="molecule type" value="Genomic_DNA"/>
</dbReference>
<dbReference type="RefSeq" id="XP_453469.1">
    <property type="nucleotide sequence ID" value="XM_453469.1"/>
</dbReference>
<dbReference type="SMR" id="Q6CRH0"/>
<dbReference type="FunCoup" id="Q6CRH0">
    <property type="interactions" value="71"/>
</dbReference>
<dbReference type="STRING" id="284590.Q6CRH0"/>
<dbReference type="PaxDb" id="284590-Q6CRH0"/>
<dbReference type="KEGG" id="kla:KLLA0_D09130g"/>
<dbReference type="eggNOG" id="ENOG502RY86">
    <property type="taxonomic scope" value="Eukaryota"/>
</dbReference>
<dbReference type="HOGENOM" id="CLU_069448_0_0_1"/>
<dbReference type="InParanoid" id="Q6CRH0"/>
<dbReference type="OMA" id="MYCSHCI"/>
<dbReference type="Proteomes" id="UP000000598">
    <property type="component" value="Chromosome D"/>
</dbReference>
<dbReference type="GO" id="GO:0034045">
    <property type="term" value="C:phagophore assembly site membrane"/>
    <property type="evidence" value="ECO:0007669"/>
    <property type="project" value="UniProtKB-SubCell"/>
</dbReference>
<dbReference type="GO" id="GO:0032991">
    <property type="term" value="C:protein-containing complex"/>
    <property type="evidence" value="ECO:0007669"/>
    <property type="project" value="UniProtKB-ARBA"/>
</dbReference>
<dbReference type="GO" id="GO:0005774">
    <property type="term" value="C:vacuolar membrane"/>
    <property type="evidence" value="ECO:0007669"/>
    <property type="project" value="UniProtKB-SubCell"/>
</dbReference>
<dbReference type="GO" id="GO:0016236">
    <property type="term" value="P:macroautophagy"/>
    <property type="evidence" value="ECO:0007669"/>
    <property type="project" value="InterPro"/>
</dbReference>
<dbReference type="GO" id="GO:0015031">
    <property type="term" value="P:protein transport"/>
    <property type="evidence" value="ECO:0007669"/>
    <property type="project" value="UniProtKB-KW"/>
</dbReference>
<dbReference type="InterPro" id="IPR023261">
    <property type="entry name" value="Autophagy-related_protein_14"/>
</dbReference>
<dbReference type="InterPro" id="IPR018791">
    <property type="entry name" value="UV_resistance/autophagy_Atg14"/>
</dbReference>
<dbReference type="Pfam" id="PF10186">
    <property type="entry name" value="ATG14"/>
    <property type="match status" value="1"/>
</dbReference>
<dbReference type="PRINTS" id="PR02030">
    <property type="entry name" value="AUTOPHGYRP14"/>
</dbReference>
<name>ATG14_KLULA</name>
<feature type="chain" id="PRO_0000212452" description="Autophagy-related protein 14">
    <location>
        <begin position="1"/>
        <end position="307"/>
    </location>
</feature>
<feature type="region of interest" description="Cysteine repeats" evidence="1">
    <location>
        <begin position="4"/>
        <end position="22"/>
    </location>
</feature>
<feature type="coiled-coil region" evidence="2">
    <location>
        <begin position="36"/>
        <end position="113"/>
    </location>
</feature>
<reference key="1">
    <citation type="journal article" date="2004" name="Nature">
        <title>Genome evolution in yeasts.</title>
        <authorList>
            <person name="Dujon B."/>
            <person name="Sherman D."/>
            <person name="Fischer G."/>
            <person name="Durrens P."/>
            <person name="Casaregola S."/>
            <person name="Lafontaine I."/>
            <person name="de Montigny J."/>
            <person name="Marck C."/>
            <person name="Neuveglise C."/>
            <person name="Talla E."/>
            <person name="Goffard N."/>
            <person name="Frangeul L."/>
            <person name="Aigle M."/>
            <person name="Anthouard V."/>
            <person name="Babour A."/>
            <person name="Barbe V."/>
            <person name="Barnay S."/>
            <person name="Blanchin S."/>
            <person name="Beckerich J.-M."/>
            <person name="Beyne E."/>
            <person name="Bleykasten C."/>
            <person name="Boisrame A."/>
            <person name="Boyer J."/>
            <person name="Cattolico L."/>
            <person name="Confanioleri F."/>
            <person name="de Daruvar A."/>
            <person name="Despons L."/>
            <person name="Fabre E."/>
            <person name="Fairhead C."/>
            <person name="Ferry-Dumazet H."/>
            <person name="Groppi A."/>
            <person name="Hantraye F."/>
            <person name="Hennequin C."/>
            <person name="Jauniaux N."/>
            <person name="Joyet P."/>
            <person name="Kachouri R."/>
            <person name="Kerrest A."/>
            <person name="Koszul R."/>
            <person name="Lemaire M."/>
            <person name="Lesur I."/>
            <person name="Ma L."/>
            <person name="Muller H."/>
            <person name="Nicaud J.-M."/>
            <person name="Nikolski M."/>
            <person name="Oztas S."/>
            <person name="Ozier-Kalogeropoulos O."/>
            <person name="Pellenz S."/>
            <person name="Potier S."/>
            <person name="Richard G.-F."/>
            <person name="Straub M.-L."/>
            <person name="Suleau A."/>
            <person name="Swennen D."/>
            <person name="Tekaia F."/>
            <person name="Wesolowski-Louvel M."/>
            <person name="Westhof E."/>
            <person name="Wirth B."/>
            <person name="Zeniou-Meyer M."/>
            <person name="Zivanovic Y."/>
            <person name="Bolotin-Fukuhara M."/>
            <person name="Thierry A."/>
            <person name="Bouchier C."/>
            <person name="Caudron B."/>
            <person name="Scarpelli C."/>
            <person name="Gaillardin C."/>
            <person name="Weissenbach J."/>
            <person name="Wincker P."/>
            <person name="Souciet J.-L."/>
        </authorList>
    </citation>
    <scope>NUCLEOTIDE SEQUENCE [LARGE SCALE GENOMIC DNA]</scope>
    <source>
        <strain>ATCC 8585 / CBS 2359 / DSM 70799 / NBRC 1267 / NRRL Y-1140 / WM37</strain>
    </source>
</reference>
<keyword id="KW-0072">Autophagy</keyword>
<keyword id="KW-0175">Coiled coil</keyword>
<keyword id="KW-0472">Membrane</keyword>
<keyword id="KW-0653">Protein transport</keyword>
<keyword id="KW-1185">Reference proteome</keyword>
<keyword id="KW-0813">Transport</keyword>
<keyword id="KW-0926">Vacuole</keyword>
<protein>
    <recommendedName>
        <fullName>Autophagy-related protein 14</fullName>
    </recommendedName>
</protein>
<gene>
    <name type="primary">ATG14</name>
    <name type="ordered locus">KLLA0D09130g</name>
</gene>